<keyword id="KW-0496">Mitochondrion</keyword>
<keyword id="KW-1185">Reference proteome</keyword>
<keyword id="KW-0687">Ribonucleoprotein</keyword>
<keyword id="KW-0689">Ribosomal protein</keyword>
<comment type="subunit">
    <text evidence="1">Component of the mitochondrial ribosome large subunit (39S) which comprises a 16S rRNA and about 50 distinct proteins (By similarity).</text>
</comment>
<comment type="subcellular location">
    <subcellularLocation>
        <location evidence="1">Mitochondrion</location>
    </subcellularLocation>
</comment>
<comment type="similarity">
    <text evidence="2">Belongs to the universal ribosomal protein uL13 family.</text>
</comment>
<proteinExistence type="evidence at transcript level"/>
<name>RM13_DROME</name>
<feature type="chain" id="PRO_0000133795" description="Large ribosomal subunit protein uL13m">
    <location>
        <begin position="1"/>
        <end position="178"/>
    </location>
</feature>
<organism>
    <name type="scientific">Drosophila melanogaster</name>
    <name type="common">Fruit fly</name>
    <dbReference type="NCBI Taxonomy" id="7227"/>
    <lineage>
        <taxon>Eukaryota</taxon>
        <taxon>Metazoa</taxon>
        <taxon>Ecdysozoa</taxon>
        <taxon>Arthropoda</taxon>
        <taxon>Hexapoda</taxon>
        <taxon>Insecta</taxon>
        <taxon>Pterygota</taxon>
        <taxon>Neoptera</taxon>
        <taxon>Endopterygota</taxon>
        <taxon>Diptera</taxon>
        <taxon>Brachycera</taxon>
        <taxon>Muscomorpha</taxon>
        <taxon>Ephydroidea</taxon>
        <taxon>Drosophilidae</taxon>
        <taxon>Drosophila</taxon>
        <taxon>Sophophora</taxon>
    </lineage>
</organism>
<gene>
    <name type="primary">mRpL13</name>
    <name type="ORF">CG10603</name>
</gene>
<evidence type="ECO:0000250" key="1">
    <source>
        <dbReference type="UniProtKB" id="Q9BYD1"/>
    </source>
</evidence>
<evidence type="ECO:0000305" key="2"/>
<protein>
    <recommendedName>
        <fullName evidence="2">Large ribosomal subunit protein uL13m</fullName>
    </recommendedName>
    <alternativeName>
        <fullName>39S ribosomal protein L13, mitochondrial</fullName>
        <shortName>L13mt</shortName>
        <shortName>MRP-L13</shortName>
    </alternativeName>
</protein>
<sequence>MSIAKRVQQWATFARTWHIYDCTWQNPFESAKLVKTHLLGLQKPIYHPMNDCGDHVVLINTREIALPGDEWVKRVYFHHTGYPGGASWTLAWQLHEKDPTMVMKKAVYNSMRGNLQRRHTMQRLHLFADDQVPEEILQNVTNQIRTPRSIPQRLDHIDKETLENFPNIMDYPKDYILR</sequence>
<dbReference type="EMBL" id="AE014134">
    <property type="protein sequence ID" value="AAF53719.2"/>
    <property type="molecule type" value="Genomic_DNA"/>
</dbReference>
<dbReference type="EMBL" id="BT053702">
    <property type="protein sequence ID" value="ACK77619.1"/>
    <property type="molecule type" value="mRNA"/>
</dbReference>
<dbReference type="RefSeq" id="NP_523598.2">
    <property type="nucleotide sequence ID" value="NM_078874.4"/>
</dbReference>
<dbReference type="SMR" id="Q9VJ38"/>
<dbReference type="FunCoup" id="Q9VJ38">
    <property type="interactions" value="1318"/>
</dbReference>
<dbReference type="IntAct" id="Q9VJ38">
    <property type="interactions" value="47"/>
</dbReference>
<dbReference type="STRING" id="7227.FBpp0088360"/>
<dbReference type="PaxDb" id="7227-FBpp0088360"/>
<dbReference type="DNASU" id="35145"/>
<dbReference type="EnsemblMetazoa" id="FBtr0089318">
    <property type="protein sequence ID" value="FBpp0088360"/>
    <property type="gene ID" value="FBgn0032720"/>
</dbReference>
<dbReference type="GeneID" id="35145"/>
<dbReference type="KEGG" id="dme:Dmel_CG10603"/>
<dbReference type="AGR" id="FB:FBgn0032720"/>
<dbReference type="CTD" id="28998"/>
<dbReference type="FlyBase" id="FBgn0032720">
    <property type="gene designation" value="mRpL13"/>
</dbReference>
<dbReference type="VEuPathDB" id="VectorBase:FBgn0032720"/>
<dbReference type="eggNOG" id="KOG3203">
    <property type="taxonomic scope" value="Eukaryota"/>
</dbReference>
<dbReference type="GeneTree" id="ENSGT00390000001515"/>
<dbReference type="HOGENOM" id="CLU_082184_1_3_1"/>
<dbReference type="InParanoid" id="Q9VJ38"/>
<dbReference type="OMA" id="HKPIYTP"/>
<dbReference type="OrthoDB" id="274622at2759"/>
<dbReference type="PhylomeDB" id="Q9VJ38"/>
<dbReference type="Reactome" id="R-DME-5389840">
    <property type="pathway name" value="Mitochondrial translation elongation"/>
</dbReference>
<dbReference type="Reactome" id="R-DME-5419276">
    <property type="pathway name" value="Mitochondrial translation termination"/>
</dbReference>
<dbReference type="SignaLink" id="Q9VJ38"/>
<dbReference type="BioGRID-ORCS" id="35145">
    <property type="hits" value="0 hits in 1 CRISPR screen"/>
</dbReference>
<dbReference type="GenomeRNAi" id="35145"/>
<dbReference type="PRO" id="PR:Q9VJ38"/>
<dbReference type="Proteomes" id="UP000000803">
    <property type="component" value="Chromosome 2L"/>
</dbReference>
<dbReference type="Bgee" id="FBgn0032720">
    <property type="expression patterns" value="Expressed in lamina wide-field cell Lawf2 (Drosophila) in brain and 108 other cell types or tissues"/>
</dbReference>
<dbReference type="GO" id="GO:0005762">
    <property type="term" value="C:mitochondrial large ribosomal subunit"/>
    <property type="evidence" value="ECO:0000250"/>
    <property type="project" value="UniProtKB"/>
</dbReference>
<dbReference type="GO" id="GO:0005739">
    <property type="term" value="C:mitochondrion"/>
    <property type="evidence" value="ECO:0007005"/>
    <property type="project" value="FlyBase"/>
</dbReference>
<dbReference type="GO" id="GO:0005840">
    <property type="term" value="C:ribosome"/>
    <property type="evidence" value="ECO:0000318"/>
    <property type="project" value="GO_Central"/>
</dbReference>
<dbReference type="GO" id="GO:0003729">
    <property type="term" value="F:mRNA binding"/>
    <property type="evidence" value="ECO:0000318"/>
    <property type="project" value="GO_Central"/>
</dbReference>
<dbReference type="GO" id="GO:0003735">
    <property type="term" value="F:structural constituent of ribosome"/>
    <property type="evidence" value="ECO:0000318"/>
    <property type="project" value="GO_Central"/>
</dbReference>
<dbReference type="GO" id="GO:0032543">
    <property type="term" value="P:mitochondrial translation"/>
    <property type="evidence" value="ECO:0000304"/>
    <property type="project" value="FlyBase"/>
</dbReference>
<dbReference type="GO" id="GO:0017148">
    <property type="term" value="P:negative regulation of translation"/>
    <property type="evidence" value="ECO:0000318"/>
    <property type="project" value="GO_Central"/>
</dbReference>
<dbReference type="CDD" id="cd00392">
    <property type="entry name" value="Ribosomal_L13"/>
    <property type="match status" value="1"/>
</dbReference>
<dbReference type="FunFam" id="3.90.1180.10:FF:000005">
    <property type="entry name" value="39S ribosomal protein L13, mitochondrial"/>
    <property type="match status" value="1"/>
</dbReference>
<dbReference type="Gene3D" id="3.90.1180.10">
    <property type="entry name" value="Ribosomal protein L13"/>
    <property type="match status" value="1"/>
</dbReference>
<dbReference type="HAMAP" id="MF_01366">
    <property type="entry name" value="Ribosomal_uL13"/>
    <property type="match status" value="1"/>
</dbReference>
<dbReference type="InterPro" id="IPR005822">
    <property type="entry name" value="Ribosomal_uL13"/>
</dbReference>
<dbReference type="InterPro" id="IPR005823">
    <property type="entry name" value="Ribosomal_uL13_bac-type"/>
</dbReference>
<dbReference type="InterPro" id="IPR036899">
    <property type="entry name" value="Ribosomal_uL13_sf"/>
</dbReference>
<dbReference type="PANTHER" id="PTHR11545:SF2">
    <property type="entry name" value="LARGE RIBOSOMAL SUBUNIT PROTEIN UL13M"/>
    <property type="match status" value="1"/>
</dbReference>
<dbReference type="PANTHER" id="PTHR11545">
    <property type="entry name" value="RIBOSOMAL PROTEIN L13"/>
    <property type="match status" value="1"/>
</dbReference>
<dbReference type="Pfam" id="PF00572">
    <property type="entry name" value="Ribosomal_L13"/>
    <property type="match status" value="1"/>
</dbReference>
<dbReference type="PIRSF" id="PIRSF002181">
    <property type="entry name" value="Ribosomal_L13"/>
    <property type="match status" value="1"/>
</dbReference>
<dbReference type="SUPFAM" id="SSF52161">
    <property type="entry name" value="Ribosomal protein L13"/>
    <property type="match status" value="1"/>
</dbReference>
<reference key="1">
    <citation type="journal article" date="2000" name="Science">
        <title>The genome sequence of Drosophila melanogaster.</title>
        <authorList>
            <person name="Adams M.D."/>
            <person name="Celniker S.E."/>
            <person name="Holt R.A."/>
            <person name="Evans C.A."/>
            <person name="Gocayne J.D."/>
            <person name="Amanatides P.G."/>
            <person name="Scherer S.E."/>
            <person name="Li P.W."/>
            <person name="Hoskins R.A."/>
            <person name="Galle R.F."/>
            <person name="George R.A."/>
            <person name="Lewis S.E."/>
            <person name="Richards S."/>
            <person name="Ashburner M."/>
            <person name="Henderson S.N."/>
            <person name="Sutton G.G."/>
            <person name="Wortman J.R."/>
            <person name="Yandell M.D."/>
            <person name="Zhang Q."/>
            <person name="Chen L.X."/>
            <person name="Brandon R.C."/>
            <person name="Rogers Y.-H.C."/>
            <person name="Blazej R.G."/>
            <person name="Champe M."/>
            <person name="Pfeiffer B.D."/>
            <person name="Wan K.H."/>
            <person name="Doyle C."/>
            <person name="Baxter E.G."/>
            <person name="Helt G."/>
            <person name="Nelson C.R."/>
            <person name="Miklos G.L.G."/>
            <person name="Abril J.F."/>
            <person name="Agbayani A."/>
            <person name="An H.-J."/>
            <person name="Andrews-Pfannkoch C."/>
            <person name="Baldwin D."/>
            <person name="Ballew R.M."/>
            <person name="Basu A."/>
            <person name="Baxendale J."/>
            <person name="Bayraktaroglu L."/>
            <person name="Beasley E.M."/>
            <person name="Beeson K.Y."/>
            <person name="Benos P.V."/>
            <person name="Berman B.P."/>
            <person name="Bhandari D."/>
            <person name="Bolshakov S."/>
            <person name="Borkova D."/>
            <person name="Botchan M.R."/>
            <person name="Bouck J."/>
            <person name="Brokstein P."/>
            <person name="Brottier P."/>
            <person name="Burtis K.C."/>
            <person name="Busam D.A."/>
            <person name="Butler H."/>
            <person name="Cadieu E."/>
            <person name="Center A."/>
            <person name="Chandra I."/>
            <person name="Cherry J.M."/>
            <person name="Cawley S."/>
            <person name="Dahlke C."/>
            <person name="Davenport L.B."/>
            <person name="Davies P."/>
            <person name="de Pablos B."/>
            <person name="Delcher A."/>
            <person name="Deng Z."/>
            <person name="Mays A.D."/>
            <person name="Dew I."/>
            <person name="Dietz S.M."/>
            <person name="Dodson K."/>
            <person name="Doup L.E."/>
            <person name="Downes M."/>
            <person name="Dugan-Rocha S."/>
            <person name="Dunkov B.C."/>
            <person name="Dunn P."/>
            <person name="Durbin K.J."/>
            <person name="Evangelista C.C."/>
            <person name="Ferraz C."/>
            <person name="Ferriera S."/>
            <person name="Fleischmann W."/>
            <person name="Fosler C."/>
            <person name="Gabrielian A.E."/>
            <person name="Garg N.S."/>
            <person name="Gelbart W.M."/>
            <person name="Glasser K."/>
            <person name="Glodek A."/>
            <person name="Gong F."/>
            <person name="Gorrell J.H."/>
            <person name="Gu Z."/>
            <person name="Guan P."/>
            <person name="Harris M."/>
            <person name="Harris N.L."/>
            <person name="Harvey D.A."/>
            <person name="Heiman T.J."/>
            <person name="Hernandez J.R."/>
            <person name="Houck J."/>
            <person name="Hostin D."/>
            <person name="Houston K.A."/>
            <person name="Howland T.J."/>
            <person name="Wei M.-H."/>
            <person name="Ibegwam C."/>
            <person name="Jalali M."/>
            <person name="Kalush F."/>
            <person name="Karpen G.H."/>
            <person name="Ke Z."/>
            <person name="Kennison J.A."/>
            <person name="Ketchum K.A."/>
            <person name="Kimmel B.E."/>
            <person name="Kodira C.D."/>
            <person name="Kraft C.L."/>
            <person name="Kravitz S."/>
            <person name="Kulp D."/>
            <person name="Lai Z."/>
            <person name="Lasko P."/>
            <person name="Lei Y."/>
            <person name="Levitsky A.A."/>
            <person name="Li J.H."/>
            <person name="Li Z."/>
            <person name="Liang Y."/>
            <person name="Lin X."/>
            <person name="Liu X."/>
            <person name="Mattei B."/>
            <person name="McIntosh T.C."/>
            <person name="McLeod M.P."/>
            <person name="McPherson D."/>
            <person name="Merkulov G."/>
            <person name="Milshina N.V."/>
            <person name="Mobarry C."/>
            <person name="Morris J."/>
            <person name="Moshrefi A."/>
            <person name="Mount S.M."/>
            <person name="Moy M."/>
            <person name="Murphy B."/>
            <person name="Murphy L."/>
            <person name="Muzny D.M."/>
            <person name="Nelson D.L."/>
            <person name="Nelson D.R."/>
            <person name="Nelson K.A."/>
            <person name="Nixon K."/>
            <person name="Nusskern D.R."/>
            <person name="Pacleb J.M."/>
            <person name="Palazzolo M."/>
            <person name="Pittman G.S."/>
            <person name="Pan S."/>
            <person name="Pollard J."/>
            <person name="Puri V."/>
            <person name="Reese M.G."/>
            <person name="Reinert K."/>
            <person name="Remington K."/>
            <person name="Saunders R.D.C."/>
            <person name="Scheeler F."/>
            <person name="Shen H."/>
            <person name="Shue B.C."/>
            <person name="Siden-Kiamos I."/>
            <person name="Simpson M."/>
            <person name="Skupski M.P."/>
            <person name="Smith T.J."/>
            <person name="Spier E."/>
            <person name="Spradling A.C."/>
            <person name="Stapleton M."/>
            <person name="Strong R."/>
            <person name="Sun E."/>
            <person name="Svirskas R."/>
            <person name="Tector C."/>
            <person name="Turner R."/>
            <person name="Venter E."/>
            <person name="Wang A.H."/>
            <person name="Wang X."/>
            <person name="Wang Z.-Y."/>
            <person name="Wassarman D.A."/>
            <person name="Weinstock G.M."/>
            <person name="Weissenbach J."/>
            <person name="Williams S.M."/>
            <person name="Woodage T."/>
            <person name="Worley K.C."/>
            <person name="Wu D."/>
            <person name="Yang S."/>
            <person name="Yao Q.A."/>
            <person name="Ye J."/>
            <person name="Yeh R.-F."/>
            <person name="Zaveri J.S."/>
            <person name="Zhan M."/>
            <person name="Zhang G."/>
            <person name="Zhao Q."/>
            <person name="Zheng L."/>
            <person name="Zheng X.H."/>
            <person name="Zhong F.N."/>
            <person name="Zhong W."/>
            <person name="Zhou X."/>
            <person name="Zhu S.C."/>
            <person name="Zhu X."/>
            <person name="Smith H.O."/>
            <person name="Gibbs R.A."/>
            <person name="Myers E.W."/>
            <person name="Rubin G.M."/>
            <person name="Venter J.C."/>
        </authorList>
    </citation>
    <scope>NUCLEOTIDE SEQUENCE [LARGE SCALE GENOMIC DNA]</scope>
    <source>
        <strain>Berkeley</strain>
    </source>
</reference>
<reference key="2">
    <citation type="journal article" date="2002" name="Genome Biol.">
        <title>Annotation of the Drosophila melanogaster euchromatic genome: a systematic review.</title>
        <authorList>
            <person name="Misra S."/>
            <person name="Crosby M.A."/>
            <person name="Mungall C.J."/>
            <person name="Matthews B.B."/>
            <person name="Campbell K.S."/>
            <person name="Hradecky P."/>
            <person name="Huang Y."/>
            <person name="Kaminker J.S."/>
            <person name="Millburn G.H."/>
            <person name="Prochnik S.E."/>
            <person name="Smith C.D."/>
            <person name="Tupy J.L."/>
            <person name="Whitfield E.J."/>
            <person name="Bayraktaroglu L."/>
            <person name="Berman B.P."/>
            <person name="Bettencourt B.R."/>
            <person name="Celniker S.E."/>
            <person name="de Grey A.D.N.J."/>
            <person name="Drysdale R.A."/>
            <person name="Harris N.L."/>
            <person name="Richter J."/>
            <person name="Russo S."/>
            <person name="Schroeder A.J."/>
            <person name="Shu S.Q."/>
            <person name="Stapleton M."/>
            <person name="Yamada C."/>
            <person name="Ashburner M."/>
            <person name="Gelbart W.M."/>
            <person name="Rubin G.M."/>
            <person name="Lewis S.E."/>
        </authorList>
    </citation>
    <scope>GENOME REANNOTATION</scope>
    <source>
        <strain>Berkeley</strain>
    </source>
</reference>
<reference key="3">
    <citation type="submission" date="2008-12" db="EMBL/GenBank/DDBJ databases">
        <authorList>
            <person name="Carlson J.W."/>
            <person name="Booth B."/>
            <person name="Frise E."/>
            <person name="Park S."/>
            <person name="Wan K.H."/>
            <person name="Yu C."/>
            <person name="Celniker S.E."/>
        </authorList>
    </citation>
    <scope>NUCLEOTIDE SEQUENCE [LARGE SCALE MRNA]</scope>
    <source>
        <strain>Berkeley</strain>
        <tissue>Ovary</tissue>
    </source>
</reference>
<accession>Q9VJ38</accession>
<accession>B7FNL2</accession>